<comment type="function">
    <text evidence="4 5 11">Catalyzes the oxidation of 3-hydroxypropionaldehyde (3-HPA) to 3-hydroxypropionic acid (3-HP) (PubMed:18668238). It acts preferentially with NAD but can also use NADP (PubMed:18668238). 3-HPA appears to be the most suitable substrate for PuuC followed by isovaleraldehyde, propionaldehyde, butyraldehyde, and valeraldehyde (PubMed:18668238). It might play a role in propionate and/or acetic acid metabolisms (PubMed:18668238). Also involved in the breakdown of putrescine through the oxidation of gamma-Glu-gamma-aminobutyraldehyde to gamma-Glu-gamma-aminobutyrate (gamma-Glu-GABA) (PubMed:15590624).</text>
</comment>
<comment type="catalytic activity">
    <reaction evidence="4 5 11">
        <text>an aldehyde + NADP(+) + H2O = a carboxylate + NADPH + 2 H(+)</text>
        <dbReference type="Rhea" id="RHEA:11888"/>
        <dbReference type="ChEBI" id="CHEBI:15377"/>
        <dbReference type="ChEBI" id="CHEBI:15378"/>
        <dbReference type="ChEBI" id="CHEBI:17478"/>
        <dbReference type="ChEBI" id="CHEBI:29067"/>
        <dbReference type="ChEBI" id="CHEBI:57783"/>
        <dbReference type="ChEBI" id="CHEBI:58349"/>
        <dbReference type="EC" id="1.2.1.5"/>
    </reaction>
</comment>
<comment type="catalytic activity">
    <reaction evidence="4 5 11">
        <text>an aldehyde + NAD(+) + H2O = a carboxylate + NADH + 2 H(+)</text>
        <dbReference type="Rhea" id="RHEA:16185"/>
        <dbReference type="ChEBI" id="CHEBI:15377"/>
        <dbReference type="ChEBI" id="CHEBI:15378"/>
        <dbReference type="ChEBI" id="CHEBI:17478"/>
        <dbReference type="ChEBI" id="CHEBI:29067"/>
        <dbReference type="ChEBI" id="CHEBI:57540"/>
        <dbReference type="ChEBI" id="CHEBI:57945"/>
        <dbReference type="EC" id="1.2.1.5"/>
    </reaction>
</comment>
<comment type="catalytic activity">
    <reaction evidence="4">
        <text>4-(gamma-L-glutamylamino)butanal + NADP(+) + H2O = 4-(gamma-L-glutamylamino)butanoate + NADPH + 2 H(+)</text>
        <dbReference type="Rhea" id="RHEA:28410"/>
        <dbReference type="ChEBI" id="CHEBI:15377"/>
        <dbReference type="ChEBI" id="CHEBI:15378"/>
        <dbReference type="ChEBI" id="CHEBI:57783"/>
        <dbReference type="ChEBI" id="CHEBI:58349"/>
        <dbReference type="ChEBI" id="CHEBI:58800"/>
        <dbReference type="ChEBI" id="CHEBI:61508"/>
    </reaction>
</comment>
<comment type="catalytic activity">
    <reaction evidence="4">
        <text>4-(gamma-L-glutamylamino)butanal + NAD(+) + H2O = 4-(gamma-L-glutamylamino)butanoate + NADH + 2 H(+)</text>
        <dbReference type="Rhea" id="RHEA:42340"/>
        <dbReference type="ChEBI" id="CHEBI:15377"/>
        <dbReference type="ChEBI" id="CHEBI:15378"/>
        <dbReference type="ChEBI" id="CHEBI:57540"/>
        <dbReference type="ChEBI" id="CHEBI:57945"/>
        <dbReference type="ChEBI" id="CHEBI:58800"/>
        <dbReference type="ChEBI" id="CHEBI:61508"/>
    </reaction>
</comment>
<comment type="activity regulation">
    <text evidence="5">Lithium ions exhibits the highest inhibition (97%). To a lesser extent (5-20%), potassium, sodium, and ammonium ions also inhibit PuuC activity. Transition metals, such as copper and zinc ions inhibit PuuC activity by more than 90%. The presence of heavy metals (mercury, silver) or sodium hydrogensulfite in the reaction mixture completely inactivate PuuC; in contrast, disulfide reductants such as DTT and 2-mercaptoethanol significantly increase its activity by 75% and 27%, respectively.</text>
</comment>
<comment type="biophysicochemical properties">
    <kinetics>
        <KM evidence="5">0.06 mM for 3-hydroxypropionaldehyde (with NAD at ph 8 and at 37 degrees Celsius)</KM>
        <KM evidence="5">0.12 mM for 3-hydroxypropionic acid (with NADH at ph 8 and at 37 degrees Celsius)</KM>
        <KM evidence="5">0.24 mM for valeraldehyde (with NAD at ph 8 and at 37 degrees Celsius)</KM>
        <KM evidence="5">0.29 mM for 3-hydroxypropionaldehyde (with NADP at ph 8 and at 37 degrees Celsius)</KM>
        <KM evidence="5">0.49 mM for 3-hydroxypropionaldehyde (with NAD at ph 8 and at 37 degrees Celsius)</KM>
        <KM evidence="5">0.68 mM for isovaleraldehyde (with NAD at ph 8 and at 37 degrees Celsius)</KM>
        <KM evidence="5">0.97 mM for butyraldehyde (with NAD at ph 8 and at 37 degrees Celsius)</KM>
        <KM evidence="5">1 mM for acetaldehyde (with NAD at ph 8 and at 37 degrees Celsius)</KM>
        <KM evidence="5">1.21 mM for propionaldehyde (with NAD at ph 8 and at 37 degrees Celsius)</KM>
        <KM evidence="5">5.37 mM for benzaldehyde (with NADP at ph 8 and at 37 degrees Celsius)</KM>
        <Vmax evidence="5">0.3 umol/min/mg enzyme with 3-hydroxypropionic acid as substrate (with NADH at ph 8 and at 37 degrees Celsius)</Vmax>
        <Vmax evidence="5">5.5 umol/min/mg enzyme with 3-hydroxypropionaldehyde as substrate (with NADP at ph 8 and at 37 degrees Celsius)</Vmax>
        <Vmax evidence="5">12.39 umol/min/mg enzyme with acetaldehyde as substrate (with NAD at ph 8 and at 37 degrees Celsius)</Vmax>
        <Vmax evidence="5">19.51 umol/min/mg enzyme with benzaldehyde as substrate (with NADP at ph 8 and at 37 degrees Celsius)</Vmax>
        <Vmax evidence="5">27.35 umol/min/mg enzyme with propionaldehyde as substrate (with NAD at ph 8 and at 37 degrees Celsius)</Vmax>
        <Vmax evidence="5">29.47 umol/min/mg enzyme with valeraldehyde as substrate (with NAD at ph 8 and at 37 degrees Celsius)</Vmax>
        <Vmax evidence="5">30.07 umol/min/mg enzyme with butyraldehyde as substrate (with NAD at ph 8 and at 37 degrees Celsius)</Vmax>
        <Vmax evidence="5">30.1 umol/min/mg enzyme with 3-hydroxypropionaldehyde as substrate (with NAD at ph 8 and at 37 degrees Celsius)</Vmax>
        <Vmax evidence="5">30.67 umol/min/mg enzyme with isovaleraldehyde as substrate (with NAD at ph 8 and at 37 degrees Celsius)</Vmax>
        <Vmax evidence="5">32.1 umol/min/mg enzyme with 3-hydroxypropionaldehyde as substrate (with NAD at ph 8 and at 37 degrees Celsius)</Vmax>
    </kinetics>
    <phDependence>
        <text evidence="5">Optimum pH is 8. Activity is highly sensitive to pH variation, and an increase or decrease of one pH unit from the optimal attenuates more than 70% of activity. At pH 6.0, only 6% of the activity remains. At pH.5.0, the activity is completely abolished.</text>
    </phDependence>
    <temperatureDependence>
        <text evidence="5">Optimum temperature is 37 degrees Celsius. It appears to be stable between 20 and 50 degrees Celsius but becomes very unstable at or above 50 degrees Celsius.</text>
    </temperatureDependence>
</comment>
<comment type="pathway">
    <text evidence="10">Amine and polyamine degradation; putrescine degradation; 4-aminobutanoate from putrescine: step 3/4.</text>
</comment>
<comment type="similarity">
    <text evidence="9">Belongs to the aldehyde dehydrogenase family.</text>
</comment>
<name>PUUC_ECOLI</name>
<proteinExistence type="evidence at protein level"/>
<accession>P23883</accession>
<accession>P78250</accession>
<accession>Q5H774</accession>
<organism>
    <name type="scientific">Escherichia coli (strain K12)</name>
    <dbReference type="NCBI Taxonomy" id="83333"/>
    <lineage>
        <taxon>Bacteria</taxon>
        <taxon>Pseudomonadati</taxon>
        <taxon>Pseudomonadota</taxon>
        <taxon>Gammaproteobacteria</taxon>
        <taxon>Enterobacterales</taxon>
        <taxon>Enterobacteriaceae</taxon>
        <taxon>Escherichia</taxon>
    </lineage>
</organism>
<reference key="1">
    <citation type="journal article" date="1991" name="Gene">
        <title>Cloning an Escherichia coli gene encoding a protein remarkably similar to mammalian aldehyde dehydrogenases.</title>
        <authorList>
            <person name="Heim R."/>
            <person name="Strehler E.E."/>
        </authorList>
    </citation>
    <scope>NUCLEOTIDE SEQUENCE [GENOMIC DNA]</scope>
    <scope>FUNCTION AS AN ALDEHYDE DEHYDROGENASE</scope>
    <scope>CATALYTIC ACTIVITY</scope>
    <scope>ACTIVE SITE</scope>
</reference>
<reference key="2">
    <citation type="journal article" date="2005" name="J. Biol. Chem.">
        <title>A novel putrescine utilization pathway involves gamma-glutamylated intermediates of Escherichia coli K-12.</title>
        <authorList>
            <person name="Kurihara S."/>
            <person name="Oda S."/>
            <person name="Kato K."/>
            <person name="Kim H.G."/>
            <person name="Koyanagi T."/>
            <person name="Kumagai H."/>
            <person name="Suzuki H."/>
        </authorList>
    </citation>
    <scope>NUCLEOTIDE SEQUENCE [GENOMIC DNA]</scope>
    <scope>FUNCTION AS A GAMMA-GLUTAMYL-GAMMA-AMINOBUTYRALDEHYDE DEHYDROGENASE</scope>
    <scope>CATALYTIC ACTIVITY</scope>
    <scope>PATHWAY</scope>
    <scope>NOMENCLATURE</scope>
    <source>
        <strain>K12</strain>
    </source>
</reference>
<reference key="3">
    <citation type="journal article" date="1996" name="DNA Res.">
        <title>A 570-kb DNA sequence of the Escherichia coli K-12 genome corresponding to the 28.0-40.1 min region on the linkage map.</title>
        <authorList>
            <person name="Aiba H."/>
            <person name="Baba T."/>
            <person name="Fujita K."/>
            <person name="Hayashi K."/>
            <person name="Inada T."/>
            <person name="Isono K."/>
            <person name="Itoh T."/>
            <person name="Kasai H."/>
            <person name="Kashimoto K."/>
            <person name="Kimura S."/>
            <person name="Kitakawa M."/>
            <person name="Kitagawa M."/>
            <person name="Makino K."/>
            <person name="Miki T."/>
            <person name="Mizobuchi K."/>
            <person name="Mori H."/>
            <person name="Mori T."/>
            <person name="Motomura K."/>
            <person name="Nakade S."/>
            <person name="Nakamura Y."/>
            <person name="Nashimoto H."/>
            <person name="Nishio Y."/>
            <person name="Oshima T."/>
            <person name="Saito N."/>
            <person name="Sampei G."/>
            <person name="Seki Y."/>
            <person name="Sivasundaram S."/>
            <person name="Tagami H."/>
            <person name="Takeda J."/>
            <person name="Takemoto K."/>
            <person name="Takeuchi Y."/>
            <person name="Wada C."/>
            <person name="Yamamoto Y."/>
            <person name="Horiuchi T."/>
        </authorList>
    </citation>
    <scope>NUCLEOTIDE SEQUENCE [LARGE SCALE GENOMIC DNA]</scope>
    <source>
        <strain>K12 / W3110 / ATCC 27325 / DSM 5911</strain>
    </source>
</reference>
<reference key="4">
    <citation type="journal article" date="1997" name="Science">
        <title>The complete genome sequence of Escherichia coli K-12.</title>
        <authorList>
            <person name="Blattner F.R."/>
            <person name="Plunkett G. III"/>
            <person name="Bloch C.A."/>
            <person name="Perna N.T."/>
            <person name="Burland V."/>
            <person name="Riley M."/>
            <person name="Collado-Vides J."/>
            <person name="Glasner J.D."/>
            <person name="Rode C.K."/>
            <person name="Mayhew G.F."/>
            <person name="Gregor J."/>
            <person name="Davis N.W."/>
            <person name="Kirkpatrick H.A."/>
            <person name="Goeden M.A."/>
            <person name="Rose D.J."/>
            <person name="Mau B."/>
            <person name="Shao Y."/>
        </authorList>
    </citation>
    <scope>NUCLEOTIDE SEQUENCE [LARGE SCALE GENOMIC DNA]</scope>
    <source>
        <strain>K12 / MG1655 / ATCC 47076</strain>
    </source>
</reference>
<reference key="5">
    <citation type="journal article" date="2006" name="Mol. Syst. Biol.">
        <title>Highly accurate genome sequences of Escherichia coli K-12 strains MG1655 and W3110.</title>
        <authorList>
            <person name="Hayashi K."/>
            <person name="Morooka N."/>
            <person name="Yamamoto Y."/>
            <person name="Fujita K."/>
            <person name="Isono K."/>
            <person name="Choi S."/>
            <person name="Ohtsubo E."/>
            <person name="Baba T."/>
            <person name="Wanner B.L."/>
            <person name="Mori H."/>
            <person name="Horiuchi T."/>
        </authorList>
    </citation>
    <scope>NUCLEOTIDE SEQUENCE [LARGE SCALE GENOMIC DNA]</scope>
    <source>
        <strain>K12 / W3110 / ATCC 27325 / DSM 5911</strain>
    </source>
</reference>
<reference key="6">
    <citation type="journal article" date="2008" name="Appl. Microbiol. Biotechnol.">
        <title>Cloning, expression, and characterization of an aldehyde dehydrogenase from Escherichia coli K-12 that utilizes 3-Hydroxypropionaldehyde as a substrate.</title>
        <authorList>
            <person name="Jo J.E."/>
            <person name="Mohan Raj S."/>
            <person name="Rathnasingh C."/>
            <person name="Selvakumar E."/>
            <person name="Jung W.C."/>
            <person name="Park S."/>
        </authorList>
    </citation>
    <scope>FUNCTION AS AN ALDEHYDE DEHYDROGENASE</scope>
    <scope>CATALYTIC ACTIVITY</scope>
    <scope>BIOPHYSICOCHEMICAL PROPERTIES</scope>
    <scope>SUBSTRATE SPECIFICITY</scope>
    <scope>ACTIVITY REGULATION</scope>
    <source>
        <strain>K12</strain>
    </source>
</reference>
<feature type="chain" id="PRO_0000056448" description="NADP/NAD-dependent aldehyde dehydrogenase PuuC">
    <location>
        <begin position="1"/>
        <end position="495"/>
    </location>
</feature>
<feature type="active site" evidence="2 11">
    <location>
        <position position="267"/>
    </location>
</feature>
<feature type="active site" evidence="3 11">
    <location>
        <position position="302"/>
    </location>
</feature>
<feature type="binding site" evidence="1">
    <location>
        <begin position="244"/>
        <end position="249"/>
    </location>
    <ligand>
        <name>NAD(+)</name>
        <dbReference type="ChEBI" id="CHEBI:57540"/>
    </ligand>
</feature>
<feature type="sequence conflict" description="In Ref. 1; AAA23428." evidence="9" ref="1">
    <original>S</original>
    <variation>R</variation>
    <location>
        <position position="313"/>
    </location>
</feature>
<evidence type="ECO:0000250" key="1"/>
<evidence type="ECO:0000255" key="2">
    <source>
        <dbReference type="PROSITE-ProRule" id="PRU10007"/>
    </source>
</evidence>
<evidence type="ECO:0000255" key="3">
    <source>
        <dbReference type="PROSITE-ProRule" id="PRU10008"/>
    </source>
</evidence>
<evidence type="ECO:0000269" key="4">
    <source>
    </source>
</evidence>
<evidence type="ECO:0000269" key="5">
    <source>
    </source>
</evidence>
<evidence type="ECO:0000303" key="6">
    <source>
    </source>
</evidence>
<evidence type="ECO:0000303" key="7">
    <source>
    </source>
</evidence>
<evidence type="ECO:0000303" key="8">
    <source>
    </source>
</evidence>
<evidence type="ECO:0000305" key="9"/>
<evidence type="ECO:0000305" key="10">
    <source>
    </source>
</evidence>
<evidence type="ECO:0000305" key="11">
    <source>
    </source>
</evidence>
<dbReference type="EC" id="1.2.1.5" evidence="4 5 11"/>
<dbReference type="EMBL" id="M38433">
    <property type="protein sequence ID" value="AAA23428.1"/>
    <property type="molecule type" value="Genomic_DNA"/>
</dbReference>
<dbReference type="EMBL" id="AB200319">
    <property type="protein sequence ID" value="BAD88708.1"/>
    <property type="molecule type" value="Genomic_DNA"/>
</dbReference>
<dbReference type="EMBL" id="U00096">
    <property type="protein sequence ID" value="AAC74382.1"/>
    <property type="molecule type" value="Genomic_DNA"/>
</dbReference>
<dbReference type="EMBL" id="AP009048">
    <property type="protein sequence ID" value="BAA14869.1"/>
    <property type="molecule type" value="Genomic_DNA"/>
</dbReference>
<dbReference type="PIR" id="G64878">
    <property type="entry name" value="G64878"/>
</dbReference>
<dbReference type="RefSeq" id="NP_415816.1">
    <property type="nucleotide sequence ID" value="NC_000913.3"/>
</dbReference>
<dbReference type="RefSeq" id="WP_001009090.1">
    <property type="nucleotide sequence ID" value="NZ_SSZK01000012.1"/>
</dbReference>
<dbReference type="SMR" id="P23883"/>
<dbReference type="BioGRID" id="4263528">
    <property type="interactions" value="7"/>
</dbReference>
<dbReference type="DIP" id="DIP-9083N"/>
<dbReference type="FunCoup" id="P23883">
    <property type="interactions" value="421"/>
</dbReference>
<dbReference type="STRING" id="511145.b1300"/>
<dbReference type="PaxDb" id="511145-b1300"/>
<dbReference type="EnsemblBacteria" id="AAC74382">
    <property type="protein sequence ID" value="AAC74382"/>
    <property type="gene ID" value="b1300"/>
</dbReference>
<dbReference type="GeneID" id="947003"/>
<dbReference type="KEGG" id="ecj:JW1293"/>
<dbReference type="KEGG" id="eco:b1300"/>
<dbReference type="KEGG" id="ecoc:C3026_07630"/>
<dbReference type="PATRIC" id="fig|1411691.4.peg.979"/>
<dbReference type="EchoBASE" id="EB0035"/>
<dbReference type="eggNOG" id="COG1012">
    <property type="taxonomic scope" value="Bacteria"/>
</dbReference>
<dbReference type="HOGENOM" id="CLU_005391_0_2_6"/>
<dbReference type="InParanoid" id="P23883"/>
<dbReference type="OMA" id="GTYAINW"/>
<dbReference type="OrthoDB" id="9812625at2"/>
<dbReference type="PhylomeDB" id="P23883"/>
<dbReference type="BioCyc" id="EcoCyc:ALDHDEHYDROG-MONOMER"/>
<dbReference type="BioCyc" id="MetaCyc:ALDHDEHYDROG-MONOMER"/>
<dbReference type="BRENDA" id="1.2.1.99">
    <property type="organism ID" value="2026"/>
</dbReference>
<dbReference type="UniPathway" id="UPA00188">
    <property type="reaction ID" value="UER00882"/>
</dbReference>
<dbReference type="PRO" id="PR:P23883"/>
<dbReference type="Proteomes" id="UP000000625">
    <property type="component" value="Chromosome"/>
</dbReference>
<dbReference type="GO" id="GO:0004029">
    <property type="term" value="F:aldehyde dehydrogenase (NAD+) activity"/>
    <property type="evidence" value="ECO:0007669"/>
    <property type="project" value="RHEA"/>
</dbReference>
<dbReference type="GO" id="GO:0033721">
    <property type="term" value="F:aldehyde dehydrogenase (NADP+) activity"/>
    <property type="evidence" value="ECO:0007669"/>
    <property type="project" value="RHEA"/>
</dbReference>
<dbReference type="GO" id="GO:0004030">
    <property type="term" value="F:aldehyde dehydrogenase [NAD(P)+] activity"/>
    <property type="evidence" value="ECO:0000314"/>
    <property type="project" value="UniProtKB"/>
</dbReference>
<dbReference type="GO" id="GO:0009447">
    <property type="term" value="P:putrescine catabolic process"/>
    <property type="evidence" value="ECO:0000315"/>
    <property type="project" value="EcoCyc"/>
</dbReference>
<dbReference type="CDD" id="cd07112">
    <property type="entry name" value="ALDH_GABALDH-PuuC"/>
    <property type="match status" value="1"/>
</dbReference>
<dbReference type="FunFam" id="3.40.605.10:FF:000001">
    <property type="entry name" value="Aldehyde dehydrogenase 1"/>
    <property type="match status" value="1"/>
</dbReference>
<dbReference type="FunFam" id="3.40.309.10:FF:000012">
    <property type="entry name" value="Betaine aldehyde dehydrogenase"/>
    <property type="match status" value="1"/>
</dbReference>
<dbReference type="Gene3D" id="3.40.605.10">
    <property type="entry name" value="Aldehyde Dehydrogenase, Chain A, domain 1"/>
    <property type="match status" value="1"/>
</dbReference>
<dbReference type="Gene3D" id="3.40.309.10">
    <property type="entry name" value="Aldehyde Dehydrogenase, Chain A, domain 2"/>
    <property type="match status" value="1"/>
</dbReference>
<dbReference type="InterPro" id="IPR016161">
    <property type="entry name" value="Ald_DH/histidinol_DH"/>
</dbReference>
<dbReference type="InterPro" id="IPR016163">
    <property type="entry name" value="Ald_DH_C"/>
</dbReference>
<dbReference type="InterPro" id="IPR016160">
    <property type="entry name" value="Ald_DH_CS_CYS"/>
</dbReference>
<dbReference type="InterPro" id="IPR029510">
    <property type="entry name" value="Ald_DH_CS_GLU"/>
</dbReference>
<dbReference type="InterPro" id="IPR016162">
    <property type="entry name" value="Ald_DH_N"/>
</dbReference>
<dbReference type="InterPro" id="IPR015590">
    <property type="entry name" value="Aldehyde_DH_dom"/>
</dbReference>
<dbReference type="NCBIfam" id="NF007352">
    <property type="entry name" value="PRK09847.1"/>
    <property type="match status" value="1"/>
</dbReference>
<dbReference type="PANTHER" id="PTHR11699">
    <property type="entry name" value="ALDEHYDE DEHYDROGENASE-RELATED"/>
    <property type="match status" value="1"/>
</dbReference>
<dbReference type="Pfam" id="PF00171">
    <property type="entry name" value="Aldedh"/>
    <property type="match status" value="1"/>
</dbReference>
<dbReference type="SUPFAM" id="SSF53720">
    <property type="entry name" value="ALDH-like"/>
    <property type="match status" value="1"/>
</dbReference>
<dbReference type="PROSITE" id="PS00070">
    <property type="entry name" value="ALDEHYDE_DEHYDR_CYS"/>
    <property type="match status" value="1"/>
</dbReference>
<dbReference type="PROSITE" id="PS00687">
    <property type="entry name" value="ALDEHYDE_DEHYDR_GLU"/>
    <property type="match status" value="1"/>
</dbReference>
<keyword id="KW-0520">NAD</keyword>
<keyword id="KW-0521">NADP</keyword>
<keyword id="KW-0560">Oxidoreductase</keyword>
<keyword id="KW-1185">Reference proteome</keyword>
<gene>
    <name evidence="6" type="primary">puuC</name>
    <name evidence="7" type="synonym">aldH</name>
    <name type="ordered locus">b1300</name>
    <name type="ordered locus">JW1293</name>
</gene>
<sequence>MNFHHLAYWQDKALSLAIENRLFINGEYTAAAENETFETVDPVTQAPLAKIARGKSVDIDRAMSAARGVFERGDWSLSSPAKRKAVLNKLADLMEAHAEELALLETLDTGKPIRHSLRDDIPGAARAIRWYAEAIDKVYGEVATTSSHELAMIVREPVGVIAAIVPWNFPLLLTCWKLGPALAAGNSVILKPSEKSPLSAIRLAGLAKEAGLPDGVLNVVTGFGHEAGQALSRHNDIDAIAFTGSTRTGKQLLKDAGDSNMKRVWLEAGGKSANIVFADCPDLQQAASATAAGIFYNQGQVCIAGTRLLLEESIADEFLALLKQQAQNWQPGHPLDPATTMGTLIDCAHADSVHSFIREGESKGQLLLDGRNAGLAAAIGPTIFVDVDPNASLSREEIFGPVLVVTRFTSEEQALQLANDSQYGLGAAVWTRDLSRAHRMSRRLKAGSVFVNNYNDGDMTVPFGGYKQSGNGRDKSLHALEKFTELKTIWISLEA</sequence>
<protein>
    <recommendedName>
        <fullName evidence="7">NADP/NAD-dependent aldehyde dehydrogenase PuuC</fullName>
        <shortName evidence="7">ALDH</shortName>
        <ecNumber evidence="4 5 11">1.2.1.5</ecNumber>
    </recommendedName>
    <alternativeName>
        <fullName evidence="8">3-hydroxypropionaldehyde dehydrogenase</fullName>
    </alternativeName>
    <alternativeName>
        <fullName evidence="6">Gamma-glutamyl-gamma-aminobutyraldehyde dehydrogenase</fullName>
        <shortName evidence="6">Gamma-Glu-gamma-aminobutyraldehyde dehydrogenase</shortName>
    </alternativeName>
</protein>